<accession>P84816</accession>
<reference evidence="2" key="1">
    <citation type="journal article" date="2005" name="Peptides">
        <title>Characterization of a peptide from skin secretions of male specimens of the frog, Leptodactylus fallax that stimulates aggression in male frogs.</title>
        <authorList>
            <person name="King J.D."/>
            <person name="Rollins-Smith L.A."/>
            <person name="Nielsen P.F."/>
            <person name="John A."/>
            <person name="Conlon J.M."/>
        </authorList>
    </citation>
    <scope>PROTEIN SEQUENCE</scope>
    <scope>FUNCTION</scope>
    <scope>SUBCELLULAR LOCATION</scope>
    <scope>TISSUE SPECIFICITY</scope>
    <source>
        <tissue evidence="1">Skin secretion</tissue>
    </source>
</reference>
<name>AGSP1_LEPFX</name>
<comment type="function">
    <text evidence="1">Stimulates aggressive behavior in male frogs. No effect on female frogs.</text>
</comment>
<comment type="subcellular location">
    <subcellularLocation>
        <location evidence="1">Secreted</location>
    </subcellularLocation>
</comment>
<comment type="tissue specificity">
    <text evidence="1">Expressed by the skin glands of male frogs.</text>
</comment>
<dbReference type="SMR" id="P84816"/>
<dbReference type="GO" id="GO:0005576">
    <property type="term" value="C:extracellular region"/>
    <property type="evidence" value="ECO:0000314"/>
    <property type="project" value="UniProtKB"/>
</dbReference>
<dbReference type="GO" id="GO:0008049">
    <property type="term" value="P:male courtship behavior"/>
    <property type="evidence" value="ECO:0000314"/>
    <property type="project" value="UniProtKB"/>
</dbReference>
<feature type="peptide" id="PRO_0000235908" description="Aggression-stimulating peptide">
    <location>
        <begin position="1"/>
        <end position="25"/>
    </location>
</feature>
<sequence length="25" mass="2585">GLWDDLKAAAKKVVSSLASAAIEKL</sequence>
<proteinExistence type="evidence at protein level"/>
<organism>
    <name type="scientific">Leptodactylus fallax</name>
    <name type="common">Mountain chicken frog</name>
    <name type="synonym">Leptodactylus dominicensis</name>
    <dbReference type="NCBI Taxonomy" id="375434"/>
    <lineage>
        <taxon>Eukaryota</taxon>
        <taxon>Metazoa</taxon>
        <taxon>Chordata</taxon>
        <taxon>Craniata</taxon>
        <taxon>Vertebrata</taxon>
        <taxon>Euteleostomi</taxon>
        <taxon>Amphibia</taxon>
        <taxon>Batrachia</taxon>
        <taxon>Anura</taxon>
        <taxon>Neobatrachia</taxon>
        <taxon>Hyloidea</taxon>
        <taxon>Leptodactylidae</taxon>
        <taxon>Leptodactylinae</taxon>
        <taxon>Leptodactylus</taxon>
    </lineage>
</organism>
<keyword id="KW-0085">Behavior</keyword>
<keyword id="KW-0903">Direct protein sequencing</keyword>
<keyword id="KW-0964">Secreted</keyword>
<protein>
    <recommendedName>
        <fullName>Aggression-stimulating peptide</fullName>
    </recommendedName>
    <alternativeName>
        <fullName>LASP</fullName>
    </alternativeName>
</protein>
<evidence type="ECO:0000269" key="1">
    <source>
    </source>
</evidence>
<evidence type="ECO:0000305" key="2"/>